<evidence type="ECO:0000255" key="1">
    <source>
        <dbReference type="HAMAP-Rule" id="MF_00110"/>
    </source>
</evidence>
<evidence type="ECO:0000305" key="2"/>
<comment type="function">
    <text evidence="1">Catalyzes the conversion of 3-deoxy-D-arabino-heptulosonate 7-phosphate (DAHP) to dehydroquinate (DHQ).</text>
</comment>
<comment type="catalytic activity">
    <reaction evidence="1">
        <text>7-phospho-2-dehydro-3-deoxy-D-arabino-heptonate = 3-dehydroquinate + phosphate</text>
        <dbReference type="Rhea" id="RHEA:21968"/>
        <dbReference type="ChEBI" id="CHEBI:32364"/>
        <dbReference type="ChEBI" id="CHEBI:43474"/>
        <dbReference type="ChEBI" id="CHEBI:58394"/>
        <dbReference type="EC" id="4.2.3.4"/>
    </reaction>
</comment>
<comment type="cofactor">
    <cofactor evidence="1">
        <name>NAD(+)</name>
        <dbReference type="ChEBI" id="CHEBI:57540"/>
    </cofactor>
</comment>
<comment type="cofactor">
    <cofactor evidence="1">
        <name>Co(2+)</name>
        <dbReference type="ChEBI" id="CHEBI:48828"/>
    </cofactor>
    <cofactor evidence="1">
        <name>Zn(2+)</name>
        <dbReference type="ChEBI" id="CHEBI:29105"/>
    </cofactor>
    <text evidence="1">Binds 1 divalent metal cation per subunit. Can use either Co(2+) or Zn(2+).</text>
</comment>
<comment type="pathway">
    <text evidence="1">Metabolic intermediate biosynthesis; chorismate biosynthesis; chorismate from D-erythrose 4-phosphate and phosphoenolpyruvate: step 2/7.</text>
</comment>
<comment type="subcellular location">
    <subcellularLocation>
        <location evidence="1">Cytoplasm</location>
    </subcellularLocation>
</comment>
<comment type="similarity">
    <text evidence="1 2">Belongs to the sugar phosphate cyclases superfamily. Dehydroquinate synthase family.</text>
</comment>
<protein>
    <recommendedName>
        <fullName evidence="1">3-dehydroquinate synthase</fullName>
        <shortName evidence="1">DHQS</shortName>
        <ecNumber evidence="1">4.2.3.4</ecNumber>
    </recommendedName>
</protein>
<feature type="chain" id="PRO_0000140756" description="3-dehydroquinate synthase">
    <location>
        <begin position="1"/>
        <end position="361"/>
    </location>
</feature>
<feature type="binding site" evidence="1">
    <location>
        <begin position="73"/>
        <end position="78"/>
    </location>
    <ligand>
        <name>NAD(+)</name>
        <dbReference type="ChEBI" id="CHEBI:57540"/>
    </ligand>
</feature>
<feature type="binding site" evidence="1">
    <location>
        <begin position="107"/>
        <end position="111"/>
    </location>
    <ligand>
        <name>NAD(+)</name>
        <dbReference type="ChEBI" id="CHEBI:57540"/>
    </ligand>
</feature>
<feature type="binding site" evidence="1">
    <location>
        <begin position="131"/>
        <end position="132"/>
    </location>
    <ligand>
        <name>NAD(+)</name>
        <dbReference type="ChEBI" id="CHEBI:57540"/>
    </ligand>
</feature>
<feature type="binding site" evidence="1">
    <location>
        <position position="144"/>
    </location>
    <ligand>
        <name>NAD(+)</name>
        <dbReference type="ChEBI" id="CHEBI:57540"/>
    </ligand>
</feature>
<feature type="binding site" evidence="1">
    <location>
        <position position="153"/>
    </location>
    <ligand>
        <name>NAD(+)</name>
        <dbReference type="ChEBI" id="CHEBI:57540"/>
    </ligand>
</feature>
<feature type="binding site" evidence="1">
    <location>
        <begin position="171"/>
        <end position="174"/>
    </location>
    <ligand>
        <name>NAD(+)</name>
        <dbReference type="ChEBI" id="CHEBI:57540"/>
    </ligand>
</feature>
<feature type="binding site" evidence="1">
    <location>
        <position position="186"/>
    </location>
    <ligand>
        <name>Zn(2+)</name>
        <dbReference type="ChEBI" id="CHEBI:29105"/>
    </ligand>
</feature>
<feature type="binding site" evidence="1">
    <location>
        <position position="249"/>
    </location>
    <ligand>
        <name>Zn(2+)</name>
        <dbReference type="ChEBI" id="CHEBI:29105"/>
    </ligand>
</feature>
<feature type="binding site" evidence="1">
    <location>
        <position position="265"/>
    </location>
    <ligand>
        <name>Zn(2+)</name>
        <dbReference type="ChEBI" id="CHEBI:29105"/>
    </ligand>
</feature>
<sequence>MTNIDAPVTVQVAVDPPYPVVIGTGLSDQLDELLANRHRVAILHQPVLTQTAEAIRSHLAGKGVDAHRIEIPDAEAGKDLSVMDFIWEVLGRIGIGRKDALVSFGGGAATDVAGFAAATWLRGVSIVHVPTTLLGMVDAAVGGKTGINTEAGKNLVGAFHQPLAVLADLATLETLPRKEIASGMAEVVKAGFIADPIILDLIEADPQASLDPMGGVLPELIRRAVTVKAGVVSADEKESELREILNYGHTLAHAIERRERYEWRHGAAVSVGLVFAAELARVAGRLDDATAQRHHTILTSLGLPVSYDADALPQLLEYMAGDKKTRAGVLRFVILDGLAKPGRLVGPDPGLLVTAYAGLSA</sequence>
<accession>Q9CCS4</accession>
<dbReference type="EC" id="4.2.3.4" evidence="1"/>
<dbReference type="EMBL" id="AL583918">
    <property type="protein sequence ID" value="CAC30026.1"/>
    <property type="molecule type" value="Genomic_DNA"/>
</dbReference>
<dbReference type="PIR" id="F86973">
    <property type="entry name" value="F86973"/>
</dbReference>
<dbReference type="RefSeq" id="NP_301443.1">
    <property type="nucleotide sequence ID" value="NC_002677.1"/>
</dbReference>
<dbReference type="RefSeq" id="WP_010907767.1">
    <property type="nucleotide sequence ID" value="NC_002677.1"/>
</dbReference>
<dbReference type="SMR" id="Q9CCS4"/>
<dbReference type="STRING" id="272631.gene:17574339"/>
<dbReference type="KEGG" id="mle:ML0518"/>
<dbReference type="PATRIC" id="fig|272631.5.peg.907"/>
<dbReference type="Leproma" id="ML0518"/>
<dbReference type="eggNOG" id="COG0337">
    <property type="taxonomic scope" value="Bacteria"/>
</dbReference>
<dbReference type="HOGENOM" id="CLU_001201_0_3_11"/>
<dbReference type="OrthoDB" id="9806583at2"/>
<dbReference type="UniPathway" id="UPA00053">
    <property type="reaction ID" value="UER00085"/>
</dbReference>
<dbReference type="Proteomes" id="UP000000806">
    <property type="component" value="Chromosome"/>
</dbReference>
<dbReference type="GO" id="GO:0005737">
    <property type="term" value="C:cytoplasm"/>
    <property type="evidence" value="ECO:0007669"/>
    <property type="project" value="UniProtKB-SubCell"/>
</dbReference>
<dbReference type="GO" id="GO:0003856">
    <property type="term" value="F:3-dehydroquinate synthase activity"/>
    <property type="evidence" value="ECO:0007669"/>
    <property type="project" value="UniProtKB-UniRule"/>
</dbReference>
<dbReference type="GO" id="GO:0046872">
    <property type="term" value="F:metal ion binding"/>
    <property type="evidence" value="ECO:0007669"/>
    <property type="project" value="UniProtKB-KW"/>
</dbReference>
<dbReference type="GO" id="GO:0000166">
    <property type="term" value="F:nucleotide binding"/>
    <property type="evidence" value="ECO:0007669"/>
    <property type="project" value="UniProtKB-KW"/>
</dbReference>
<dbReference type="GO" id="GO:0008652">
    <property type="term" value="P:amino acid biosynthetic process"/>
    <property type="evidence" value="ECO:0007669"/>
    <property type="project" value="UniProtKB-KW"/>
</dbReference>
<dbReference type="GO" id="GO:0009073">
    <property type="term" value="P:aromatic amino acid family biosynthetic process"/>
    <property type="evidence" value="ECO:0007669"/>
    <property type="project" value="UniProtKB-KW"/>
</dbReference>
<dbReference type="GO" id="GO:0009423">
    <property type="term" value="P:chorismate biosynthetic process"/>
    <property type="evidence" value="ECO:0007669"/>
    <property type="project" value="UniProtKB-UniRule"/>
</dbReference>
<dbReference type="CDD" id="cd08195">
    <property type="entry name" value="DHQS"/>
    <property type="match status" value="1"/>
</dbReference>
<dbReference type="FunFam" id="3.40.50.1970:FF:000012">
    <property type="entry name" value="3-dehydroquinate synthase"/>
    <property type="match status" value="1"/>
</dbReference>
<dbReference type="Gene3D" id="3.40.50.1970">
    <property type="match status" value="1"/>
</dbReference>
<dbReference type="Gene3D" id="1.20.1090.10">
    <property type="entry name" value="Dehydroquinate synthase-like - alpha domain"/>
    <property type="match status" value="1"/>
</dbReference>
<dbReference type="HAMAP" id="MF_00110">
    <property type="entry name" value="DHQ_synthase"/>
    <property type="match status" value="1"/>
</dbReference>
<dbReference type="InterPro" id="IPR050071">
    <property type="entry name" value="Dehydroquinate_synthase"/>
</dbReference>
<dbReference type="InterPro" id="IPR016037">
    <property type="entry name" value="DHQ_synth_AroB"/>
</dbReference>
<dbReference type="InterPro" id="IPR030963">
    <property type="entry name" value="DHQ_synth_fam"/>
</dbReference>
<dbReference type="InterPro" id="IPR030960">
    <property type="entry name" value="DHQS/DOIS_N"/>
</dbReference>
<dbReference type="InterPro" id="IPR056179">
    <property type="entry name" value="DHQS_C"/>
</dbReference>
<dbReference type="NCBIfam" id="TIGR01357">
    <property type="entry name" value="aroB"/>
    <property type="match status" value="1"/>
</dbReference>
<dbReference type="PANTHER" id="PTHR43622">
    <property type="entry name" value="3-DEHYDROQUINATE SYNTHASE"/>
    <property type="match status" value="1"/>
</dbReference>
<dbReference type="PANTHER" id="PTHR43622:SF7">
    <property type="entry name" value="3-DEHYDROQUINATE SYNTHASE, CHLOROPLASTIC"/>
    <property type="match status" value="1"/>
</dbReference>
<dbReference type="Pfam" id="PF01761">
    <property type="entry name" value="DHQ_synthase"/>
    <property type="match status" value="1"/>
</dbReference>
<dbReference type="Pfam" id="PF24621">
    <property type="entry name" value="DHQS_C"/>
    <property type="match status" value="1"/>
</dbReference>
<dbReference type="PIRSF" id="PIRSF001455">
    <property type="entry name" value="DHQ_synth"/>
    <property type="match status" value="1"/>
</dbReference>
<dbReference type="SUPFAM" id="SSF56796">
    <property type="entry name" value="Dehydroquinate synthase-like"/>
    <property type="match status" value="1"/>
</dbReference>
<reference key="1">
    <citation type="journal article" date="2001" name="Nature">
        <title>Massive gene decay in the leprosy bacillus.</title>
        <authorList>
            <person name="Cole S.T."/>
            <person name="Eiglmeier K."/>
            <person name="Parkhill J."/>
            <person name="James K.D."/>
            <person name="Thomson N.R."/>
            <person name="Wheeler P.R."/>
            <person name="Honore N."/>
            <person name="Garnier T."/>
            <person name="Churcher C.M."/>
            <person name="Harris D.E."/>
            <person name="Mungall K.L."/>
            <person name="Basham D."/>
            <person name="Brown D."/>
            <person name="Chillingworth T."/>
            <person name="Connor R."/>
            <person name="Davies R.M."/>
            <person name="Devlin K."/>
            <person name="Duthoy S."/>
            <person name="Feltwell T."/>
            <person name="Fraser A."/>
            <person name="Hamlin N."/>
            <person name="Holroyd S."/>
            <person name="Hornsby T."/>
            <person name="Jagels K."/>
            <person name="Lacroix C."/>
            <person name="Maclean J."/>
            <person name="Moule S."/>
            <person name="Murphy L.D."/>
            <person name="Oliver K."/>
            <person name="Quail M.A."/>
            <person name="Rajandream M.A."/>
            <person name="Rutherford K.M."/>
            <person name="Rutter S."/>
            <person name="Seeger K."/>
            <person name="Simon S."/>
            <person name="Simmonds M."/>
            <person name="Skelton J."/>
            <person name="Squares R."/>
            <person name="Squares S."/>
            <person name="Stevens K."/>
            <person name="Taylor K."/>
            <person name="Whitehead S."/>
            <person name="Woodward J.R."/>
            <person name="Barrell B.G."/>
        </authorList>
    </citation>
    <scope>NUCLEOTIDE SEQUENCE [LARGE SCALE GENOMIC DNA]</scope>
    <source>
        <strain>TN</strain>
    </source>
</reference>
<name>AROB_MYCLE</name>
<proteinExistence type="inferred from homology"/>
<organism>
    <name type="scientific">Mycobacterium leprae (strain TN)</name>
    <dbReference type="NCBI Taxonomy" id="272631"/>
    <lineage>
        <taxon>Bacteria</taxon>
        <taxon>Bacillati</taxon>
        <taxon>Actinomycetota</taxon>
        <taxon>Actinomycetes</taxon>
        <taxon>Mycobacteriales</taxon>
        <taxon>Mycobacteriaceae</taxon>
        <taxon>Mycobacterium</taxon>
    </lineage>
</organism>
<keyword id="KW-0028">Amino-acid biosynthesis</keyword>
<keyword id="KW-0057">Aromatic amino acid biosynthesis</keyword>
<keyword id="KW-0170">Cobalt</keyword>
<keyword id="KW-0963">Cytoplasm</keyword>
<keyword id="KW-0456">Lyase</keyword>
<keyword id="KW-0479">Metal-binding</keyword>
<keyword id="KW-0520">NAD</keyword>
<keyword id="KW-0547">Nucleotide-binding</keyword>
<keyword id="KW-1185">Reference proteome</keyword>
<keyword id="KW-0862">Zinc</keyword>
<gene>
    <name evidence="1" type="primary">aroB</name>
    <name type="ordered locus">ML0518</name>
</gene>